<feature type="signal peptide" evidence="4">
    <location>
        <begin position="1"/>
        <end position="25"/>
    </location>
</feature>
<feature type="chain" id="PRO_0000441957" description="Low-density lipoprotein receptor-related protein 2" evidence="4">
    <location>
        <begin position="26"/>
        <end position="4652"/>
    </location>
</feature>
<feature type="topological domain" description="Extracellular" evidence="13">
    <location>
        <begin position="26"/>
        <end position="4422"/>
    </location>
</feature>
<feature type="transmembrane region" description="Helical" evidence="4">
    <location>
        <begin position="4423"/>
        <end position="4443"/>
    </location>
</feature>
<feature type="topological domain" description="Cytoplasmic" evidence="13">
    <location>
        <begin position="4444"/>
        <end position="4652"/>
    </location>
</feature>
<feature type="domain" description="LDL-receptor class A 1" evidence="6">
    <location>
        <begin position="27"/>
        <end position="63"/>
    </location>
</feature>
<feature type="domain" description="LDL-receptor class A 2" evidence="6">
    <location>
        <begin position="66"/>
        <end position="104"/>
    </location>
</feature>
<feature type="domain" description="LDL-receptor class A 3" evidence="6">
    <location>
        <begin position="108"/>
        <end position="144"/>
    </location>
</feature>
<feature type="domain" description="LDL-receptor class A 4" evidence="6">
    <location>
        <begin position="142"/>
        <end position="181"/>
    </location>
</feature>
<feature type="domain" description="LDL-receptor class A 5" evidence="6">
    <location>
        <begin position="183"/>
        <end position="219"/>
    </location>
</feature>
<feature type="domain" description="LDL-receptor class A 6" evidence="6">
    <location>
        <begin position="223"/>
        <end position="259"/>
    </location>
</feature>
<feature type="domain" description="LDL-receptor class A 7" evidence="6">
    <location>
        <begin position="267"/>
        <end position="308"/>
    </location>
</feature>
<feature type="domain" description="EGF-like 1; calcium-binding" evidence="5">
    <location>
        <begin position="348"/>
        <end position="386"/>
    </location>
</feature>
<feature type="repeat" description="LDL-receptor class B 1" evidence="7">
    <location>
        <begin position="436"/>
        <end position="478"/>
    </location>
</feature>
<feature type="repeat" description="LDL-receptor class B 2" evidence="7">
    <location>
        <begin position="479"/>
        <end position="521"/>
    </location>
</feature>
<feature type="repeat" description="LDL-receptor class B 3" evidence="7">
    <location>
        <begin position="522"/>
        <end position="568"/>
    </location>
</feature>
<feature type="repeat" description="LDL-receptor class B 4" evidence="7">
    <location>
        <begin position="569"/>
        <end position="613"/>
    </location>
</feature>
<feature type="repeat" description="LDL-receptor class B 5" evidence="7">
    <location>
        <begin position="753"/>
        <end position="795"/>
    </location>
</feature>
<feature type="repeat" description="LDL-receptor class B 6" evidence="7">
    <location>
        <begin position="796"/>
        <end position="837"/>
    </location>
</feature>
<feature type="repeat" description="LDL-receptor class B 7" evidence="7">
    <location>
        <begin position="838"/>
        <end position="881"/>
    </location>
</feature>
<feature type="repeat" description="LDL-receptor class B 8" evidence="7">
    <location>
        <begin position="882"/>
        <end position="925"/>
    </location>
</feature>
<feature type="domain" description="LDL-receptor class A 8" evidence="6">
    <location>
        <begin position="1025"/>
        <end position="1061"/>
    </location>
</feature>
<feature type="domain" description="LDL-receptor class A 9" evidence="6">
    <location>
        <begin position="1066"/>
        <end position="1104"/>
    </location>
</feature>
<feature type="domain" description="LDL-receptor class A 10" evidence="6">
    <location>
        <begin position="1110"/>
        <end position="1146"/>
    </location>
</feature>
<feature type="domain" description="LDL-receptor class A 11" evidence="6">
    <location>
        <begin position="1150"/>
        <end position="1186"/>
    </location>
</feature>
<feature type="domain" description="LDL-receptor class A 12" evidence="6">
    <location>
        <begin position="1188"/>
        <end position="1225"/>
    </location>
</feature>
<feature type="domain" description="LDL-receptor class A 13" evidence="6">
    <location>
        <begin position="1231"/>
        <end position="1269"/>
    </location>
</feature>
<feature type="domain" description="LDL-receptor class A 14" evidence="6">
    <location>
        <begin position="1272"/>
        <end position="1308"/>
    </location>
</feature>
<feature type="domain" description="LDL-receptor class A 15" evidence="6">
    <location>
        <begin position="1313"/>
        <end position="1351"/>
    </location>
</feature>
<feature type="repeat" description="LDL-receptor class B 9" evidence="7">
    <location>
        <begin position="1480"/>
        <end position="1522"/>
    </location>
</feature>
<feature type="repeat" description="LDL-receptor class B 10" evidence="7">
    <location>
        <begin position="1523"/>
        <end position="1565"/>
    </location>
</feature>
<feature type="repeat" description="LDL-receptor class B 11" evidence="7">
    <location>
        <begin position="1568"/>
        <end position="1611"/>
    </location>
</feature>
<feature type="repeat" description="LDL-receptor class B 12" evidence="7">
    <location>
        <begin position="1612"/>
        <end position="1654"/>
    </location>
</feature>
<feature type="repeat" description="LDL-receptor class B 13" evidence="7">
    <location>
        <begin position="1655"/>
        <end position="1696"/>
    </location>
</feature>
<feature type="repeat" description="LDL-receptor class B 14" evidence="7">
    <location>
        <begin position="1789"/>
        <end position="1831"/>
    </location>
</feature>
<feature type="repeat" description="LDL-receptor class B 15" evidence="7">
    <location>
        <begin position="1832"/>
        <end position="1881"/>
    </location>
</feature>
<feature type="repeat" description="LDL-receptor class B 16" evidence="7">
    <location>
        <begin position="1882"/>
        <end position="1929"/>
    </location>
</feature>
<feature type="repeat" description="LDL-receptor class B 17" evidence="7">
    <location>
        <begin position="1930"/>
        <end position="1971"/>
    </location>
</feature>
<feature type="repeat" description="LDL-receptor class B 18" evidence="7">
    <location>
        <begin position="1972"/>
        <end position="2012"/>
    </location>
</feature>
<feature type="repeat" description="LDL-receptor class B 19" evidence="7">
    <location>
        <begin position="2105"/>
        <end position="2154"/>
    </location>
</feature>
<feature type="repeat" description="LDL-receptor class B 20" evidence="7">
    <location>
        <begin position="2155"/>
        <end position="2199"/>
    </location>
</feature>
<feature type="repeat" description="LDL-receptor class B 21" evidence="7">
    <location>
        <begin position="2200"/>
        <end position="2243"/>
    </location>
</feature>
<feature type="repeat" description="LDL-receptor class B 22" evidence="7">
    <location>
        <begin position="2244"/>
        <end position="2287"/>
    </location>
</feature>
<feature type="repeat" description="LDL-receptor class B 23" evidence="7">
    <location>
        <begin position="2429"/>
        <end position="2475"/>
    </location>
</feature>
<feature type="repeat" description="LDL-receptor class B 24" evidence="7">
    <location>
        <begin position="2476"/>
        <end position="2516"/>
    </location>
</feature>
<feature type="repeat" description="LDL-receptor class B 25" evidence="7">
    <location>
        <begin position="2517"/>
        <end position="2560"/>
    </location>
</feature>
<feature type="repeat" description="LDL-receptor class B 26" evidence="7">
    <location>
        <begin position="2561"/>
        <end position="2602"/>
    </location>
</feature>
<feature type="repeat" description="LDL-receptor class B 27" evidence="7">
    <location>
        <begin position="2603"/>
        <end position="2644"/>
    </location>
</feature>
<feature type="domain" description="LDL-receptor class A 16" evidence="6">
    <location>
        <begin position="2696"/>
        <end position="2734"/>
    </location>
</feature>
<feature type="domain" description="LDL-receptor class A 17" evidence="6">
    <location>
        <begin position="2737"/>
        <end position="2773"/>
    </location>
</feature>
<feature type="domain" description="LDL-receptor class A 18" evidence="6">
    <location>
        <begin position="2776"/>
        <end position="2815"/>
    </location>
</feature>
<feature type="domain" description="LDL-receptor class A 19" evidence="6">
    <location>
        <begin position="2818"/>
        <end position="2857"/>
    </location>
</feature>
<feature type="domain" description="LDL-receptor class A 20" evidence="6">
    <location>
        <begin position="2860"/>
        <end position="2897"/>
    </location>
</feature>
<feature type="domain" description="LDL-receptor class A 21" evidence="6">
    <location>
        <begin position="2902"/>
        <end position="2941"/>
    </location>
</feature>
<feature type="domain" description="LDL-receptor class A 22" evidence="6">
    <location>
        <begin position="2944"/>
        <end position="2986"/>
    </location>
</feature>
<feature type="domain" description="LDL-receptor class A 23" evidence="6">
    <location>
        <begin position="2989"/>
        <end position="3025"/>
    </location>
</feature>
<feature type="domain" description="LDL-receptor class A 24" evidence="6">
    <location>
        <begin position="3028"/>
        <end position="3066"/>
    </location>
</feature>
<feature type="domain" description="LDL-receptor class A 25" evidence="6">
    <location>
        <begin position="3071"/>
        <end position="3107"/>
    </location>
</feature>
<feature type="domain" description="EGF-like 2; calcium-binding" evidence="5">
    <location>
        <begin position="3149"/>
        <end position="3189"/>
    </location>
</feature>
<feature type="repeat" description="LDL-receptor class B 28" evidence="7">
    <location>
        <begin position="3236"/>
        <end position="3278"/>
    </location>
</feature>
<feature type="repeat" description="LDL-receptor class B 29" evidence="7">
    <location>
        <begin position="3279"/>
        <end position="3321"/>
    </location>
</feature>
<feature type="repeat" description="LDL-receptor class B 30" evidence="7">
    <location>
        <begin position="3330"/>
        <end position="3373"/>
    </location>
</feature>
<feature type="repeat" description="LDL-receptor class B 31" evidence="7">
    <location>
        <begin position="3374"/>
        <end position="3417"/>
    </location>
</feature>
<feature type="repeat" description="LDL-receptor class B 32" evidence="7">
    <location>
        <begin position="3418"/>
        <end position="3458"/>
    </location>
</feature>
<feature type="domain" description="LDL-receptor class A 26" evidence="6">
    <location>
        <begin position="3509"/>
        <end position="3547"/>
    </location>
</feature>
<feature type="domain" description="LDL-receptor class A 27" evidence="6">
    <location>
        <begin position="3550"/>
        <end position="3588"/>
    </location>
</feature>
<feature type="domain" description="LDL-receptor class A 28" evidence="6">
    <location>
        <begin position="3591"/>
        <end position="3629"/>
    </location>
</feature>
<feature type="domain" description="LDL-receptor class A 29" evidence="6">
    <location>
        <begin position="3632"/>
        <end position="3670"/>
    </location>
</feature>
<feature type="domain" description="LDL-receptor class A 30" evidence="6">
    <location>
        <begin position="3675"/>
        <end position="3713"/>
    </location>
</feature>
<feature type="domain" description="LDL-receptor class A 31" evidence="6">
    <location>
        <begin position="3716"/>
        <end position="3753"/>
    </location>
</feature>
<feature type="domain" description="LDL-receptor class A 32" evidence="6">
    <location>
        <begin position="3756"/>
        <end position="3792"/>
    </location>
</feature>
<feature type="domain" description="LDL-receptor class A 33" evidence="6">
    <location>
        <begin position="3795"/>
        <end position="3831"/>
    </location>
</feature>
<feature type="domain" description="LDL-receptor class A 34" evidence="6">
    <location>
        <begin position="3839"/>
        <end position="3877"/>
    </location>
</feature>
<feature type="domain" description="LDL-receptor class A 35" evidence="6">
    <location>
        <begin position="3880"/>
        <end position="3919"/>
    </location>
</feature>
<feature type="domain" description="LDL-receptor class A 36" evidence="6">
    <location>
        <begin position="3925"/>
        <end position="3961"/>
    </location>
</feature>
<feature type="domain" description="EGF-like 3" evidence="5">
    <location>
        <begin position="3964"/>
        <end position="4004"/>
    </location>
</feature>
<feature type="domain" description="EGF-like 4; calcium-binding" evidence="5">
    <location>
        <begin position="4005"/>
        <end position="4046"/>
    </location>
</feature>
<feature type="repeat" description="LDL-receptor class B 33" evidence="7">
    <location>
        <begin position="4152"/>
        <end position="4194"/>
    </location>
</feature>
<feature type="repeat" description="LDL-receptor class B 34" evidence="7">
    <location>
        <begin position="4195"/>
        <end position="4238"/>
    </location>
</feature>
<feature type="repeat" description="LDL-receptor class B 35" evidence="7">
    <location>
        <begin position="4240"/>
        <end position="4281"/>
    </location>
</feature>
<feature type="domain" description="EGF-like 5" evidence="5">
    <location>
        <begin position="4375"/>
        <end position="4409"/>
    </location>
</feature>
<feature type="region of interest" description="Disordered" evidence="9">
    <location>
        <begin position="4536"/>
        <end position="4652"/>
    </location>
</feature>
<feature type="region of interest" description="Interaction with DAB2" evidence="3">
    <location>
        <begin position="4588"/>
        <end position="4601"/>
    </location>
</feature>
<feature type="short sequence motif" description="SH3-binding" evidence="4">
    <location>
        <begin position="4450"/>
        <end position="4459"/>
    </location>
</feature>
<feature type="short sequence motif" description="PxLPxI/L motif 1; mediates interaction with ANKRA2" evidence="2">
    <location>
        <begin position="4453"/>
        <end position="4458"/>
    </location>
</feature>
<feature type="short sequence motif" description="PxLPxI/L motif 2; mediates interaction with ANKRA2" evidence="2">
    <location>
        <begin position="4456"/>
        <end position="4461"/>
    </location>
</feature>
<feature type="short sequence motif" description="Endocytosis signal" evidence="4">
    <location>
        <begin position="4518"/>
        <end position="4523"/>
    </location>
</feature>
<feature type="short sequence motif" description="NPXY motif" evidence="4">
    <location>
        <begin position="4594"/>
        <end position="4597"/>
    </location>
</feature>
<feature type="short sequence motif" description="SH2-binding" evidence="4">
    <location>
        <begin position="4597"/>
        <end position="4600"/>
    </location>
</feature>
<feature type="short sequence motif" description="SH3-binding" evidence="4">
    <location>
        <begin position="4610"/>
        <end position="4621"/>
    </location>
</feature>
<feature type="compositionally biased region" description="Polar residues" evidence="9">
    <location>
        <begin position="4536"/>
        <end position="4553"/>
    </location>
</feature>
<feature type="compositionally biased region" description="Polar residues" evidence="9">
    <location>
        <begin position="4626"/>
        <end position="4636"/>
    </location>
</feature>
<feature type="binding site" evidence="3">
    <location>
        <position position="1128"/>
    </location>
    <ligand>
        <name>Ca(2+)</name>
        <dbReference type="ChEBI" id="CHEBI:29108"/>
    </ligand>
</feature>
<feature type="binding site" evidence="3">
    <location>
        <position position="1131"/>
    </location>
    <ligand>
        <name>Ca(2+)</name>
        <dbReference type="ChEBI" id="CHEBI:29108"/>
    </ligand>
</feature>
<feature type="binding site" evidence="3">
    <location>
        <position position="1133"/>
    </location>
    <ligand>
        <name>Ca(2+)</name>
        <dbReference type="ChEBI" id="CHEBI:29108"/>
    </ligand>
</feature>
<feature type="binding site" evidence="3">
    <location>
        <position position="1135"/>
    </location>
    <ligand>
        <name>Ca(2+)</name>
        <dbReference type="ChEBI" id="CHEBI:29108"/>
    </ligand>
</feature>
<feature type="binding site" evidence="3">
    <location>
        <position position="1141"/>
    </location>
    <ligand>
        <name>Ca(2+)</name>
        <dbReference type="ChEBI" id="CHEBI:29108"/>
    </ligand>
</feature>
<feature type="binding site" evidence="3">
    <location>
        <position position="1142"/>
    </location>
    <ligand>
        <name>Ca(2+)</name>
        <dbReference type="ChEBI" id="CHEBI:29108"/>
    </ligand>
</feature>
<feature type="binding site" evidence="2">
    <location>
        <position position="1207"/>
    </location>
    <ligand>
        <name>Ca(2+)</name>
        <dbReference type="ChEBI" id="CHEBI:29108"/>
    </ligand>
</feature>
<feature type="binding site" evidence="2">
    <location>
        <position position="1210"/>
    </location>
    <ligand>
        <name>Ca(2+)</name>
        <dbReference type="ChEBI" id="CHEBI:29108"/>
    </ligand>
</feature>
<feature type="binding site" evidence="2">
    <location>
        <position position="1212"/>
    </location>
    <ligand>
        <name>Ca(2+)</name>
        <dbReference type="ChEBI" id="CHEBI:29108"/>
    </ligand>
</feature>
<feature type="binding site" evidence="2">
    <location>
        <position position="1214"/>
    </location>
    <ligand>
        <name>Ca(2+)</name>
        <dbReference type="ChEBI" id="CHEBI:29108"/>
    </ligand>
</feature>
<feature type="binding site" evidence="2">
    <location>
        <position position="1220"/>
    </location>
    <ligand>
        <name>Ca(2+)</name>
        <dbReference type="ChEBI" id="CHEBI:29108"/>
    </ligand>
</feature>
<feature type="binding site" evidence="2">
    <location>
        <position position="1221"/>
    </location>
    <ligand>
        <name>Ca(2+)</name>
        <dbReference type="ChEBI" id="CHEBI:29108"/>
    </ligand>
</feature>
<feature type="modified residue" description="Phosphoserine" evidence="1">
    <location>
        <position position="4460"/>
    </location>
</feature>
<feature type="modified residue" description="Phosphoserine" evidence="1">
    <location>
        <position position="4568"/>
    </location>
</feature>
<feature type="modified residue" description="Phosphoserine" evidence="2">
    <location>
        <position position="4615"/>
    </location>
</feature>
<feature type="modified residue" description="Phosphothreonine" evidence="1">
    <location>
        <position position="4629"/>
    </location>
</feature>
<feature type="modified residue" description="Phosphoserine" evidence="1">
    <location>
        <position position="4650"/>
    </location>
</feature>
<feature type="glycosylation site" description="N-linked (GlcNAc...) asparagine" evidence="8">
    <location>
        <position position="160"/>
    </location>
</feature>
<feature type="glycosylation site" description="N-linked (GlcNAc...) asparagine" evidence="8">
    <location>
        <position position="179"/>
    </location>
</feature>
<feature type="glycosylation site" description="N-linked (GlcNAc...) asparagine" evidence="8">
    <location>
        <position position="341"/>
    </location>
</feature>
<feature type="glycosylation site" description="N-linked (GlcNAc...) asparagine" evidence="8">
    <location>
        <position position="388"/>
    </location>
</feature>
<feature type="glycosylation site" description="N-linked (GlcNAc...) asparagine" evidence="8">
    <location>
        <position position="771"/>
    </location>
</feature>
<feature type="glycosylation site" description="N-linked (GlcNAc...) asparagine" evidence="8">
    <location>
        <position position="866"/>
    </location>
</feature>
<feature type="glycosylation site" description="N-linked (GlcNAc...) asparagine" evidence="8">
    <location>
        <position position="1015"/>
    </location>
</feature>
<feature type="glycosylation site" description="N-linked (GlcNAc...) asparagine" evidence="8">
    <location>
        <position position="1064"/>
    </location>
</feature>
<feature type="glycosylation site" description="N-linked (GlcNAc...) asparagine" evidence="8">
    <location>
        <position position="1102"/>
    </location>
</feature>
<feature type="glycosylation site" description="N-linked (GlcNAc...) asparagine" evidence="8">
    <location>
        <position position="1188"/>
    </location>
</feature>
<feature type="glycosylation site" description="N-linked (GlcNAc...) asparagine" evidence="8">
    <location>
        <position position="1329"/>
    </location>
</feature>
<feature type="glycosylation site" description="N-linked (GlcNAc...) asparagine" evidence="8">
    <location>
        <position position="1385"/>
    </location>
</feature>
<feature type="glycosylation site" description="N-linked (GlcNAc...) asparagine" evidence="8">
    <location>
        <position position="1452"/>
    </location>
</feature>
<feature type="glycosylation site" description="N-linked (GlcNAc...) asparagine" evidence="8">
    <location>
        <position position="1498"/>
    </location>
</feature>
<feature type="glycosylation site" description="N-linked (GlcNAc...) asparagine" evidence="8">
    <location>
        <position position="1552"/>
    </location>
</feature>
<feature type="glycosylation site" description="N-linked (GlcNAc...) asparagine" evidence="8">
    <location>
        <position position="1677"/>
    </location>
</feature>
<feature type="glycosylation site" description="N-linked (GlcNAc...) asparagine" evidence="8">
    <location>
        <position position="1809"/>
    </location>
</feature>
<feature type="glycosylation site" description="N-linked (GlcNAc...) asparagine" evidence="8">
    <location>
        <position position="2053"/>
    </location>
</feature>
<feature type="glycosylation site" description="N-linked (GlcNAc...) asparagine" evidence="8">
    <location>
        <position position="2175"/>
    </location>
</feature>
<feature type="glycosylation site" description="N-linked (GlcNAc...) asparagine" evidence="8">
    <location>
        <position position="2222"/>
    </location>
</feature>
<feature type="glycosylation site" description="N-linked (GlcNAc...) asparagine" evidence="8">
    <location>
        <position position="2485"/>
    </location>
</feature>
<feature type="glycosylation site" description="N-linked (GlcNAc...) asparagine" evidence="8">
    <location>
        <position position="2698"/>
    </location>
</feature>
<feature type="glycosylation site" description="N-linked (GlcNAc...) asparagine" evidence="8">
    <location>
        <position position="2778"/>
    </location>
</feature>
<feature type="glycosylation site" description="N-linked (GlcNAc...) asparagine" evidence="8">
    <location>
        <position position="2806"/>
    </location>
</feature>
<feature type="glycosylation site" description="N-linked (GlcNAc...) asparagine" evidence="8">
    <location>
        <position position="2807"/>
    </location>
</feature>
<feature type="glycosylation site" description="N-linked (GlcNAc...) asparagine" evidence="8">
    <location>
        <position position="2944"/>
    </location>
</feature>
<feature type="glycosylation site" description="N-linked (GlcNAc...) asparagine" evidence="8">
    <location>
        <position position="2984"/>
    </location>
</feature>
<feature type="glycosylation site" description="N-linked (GlcNAc...) asparagine" evidence="8">
    <location>
        <position position="2989"/>
    </location>
</feature>
<feature type="glycosylation site" description="N-linked (GlcNAc...) asparagine" evidence="8">
    <location>
        <position position="3122"/>
    </location>
</feature>
<feature type="glycosylation site" description="N-linked (GlcNAc...) asparagine" evidence="8">
    <location>
        <position position="3208"/>
    </location>
</feature>
<feature type="glycosylation site" description="N-linked (GlcNAc...) asparagine" evidence="8">
    <location>
        <position position="3254"/>
    </location>
</feature>
<feature type="glycosylation site" description="N-linked (GlcNAc...) asparagine" evidence="8">
    <location>
        <position position="3312"/>
    </location>
</feature>
<feature type="glycosylation site" description="N-linked (GlcNAc...) asparagine" evidence="8">
    <location>
        <position position="3352"/>
    </location>
</feature>
<feature type="glycosylation site" description="N-linked (GlcNAc...) asparagine" evidence="8">
    <location>
        <position position="3435"/>
    </location>
</feature>
<feature type="glycosylation site" description="N-linked (GlcNAc...) asparagine" evidence="8">
    <location>
        <position position="3444"/>
    </location>
</feature>
<feature type="glycosylation site" description="N-linked (GlcNAc...) asparagine" evidence="8">
    <location>
        <position position="3562"/>
    </location>
</feature>
<feature type="glycosylation site" description="N-linked (GlcNAc...) asparagine" evidence="8">
    <location>
        <position position="3678"/>
    </location>
</feature>
<feature type="glycosylation site" description="N-linked (GlcNAc...) asparagine" evidence="8">
    <location>
        <position position="3878"/>
    </location>
</feature>
<feature type="glycosylation site" description="N-linked (GlcNAc...) asparagine" evidence="8">
    <location>
        <position position="3976"/>
    </location>
</feature>
<feature type="glycosylation site" description="N-linked (GlcNAc...) asparagine" evidence="8">
    <location>
        <position position="4066"/>
    </location>
</feature>
<feature type="glycosylation site" description="N-linked (GlcNAc...) asparagine" evidence="8">
    <location>
        <position position="4325"/>
    </location>
</feature>
<feature type="disulfide bond" evidence="6">
    <location>
        <begin position="28"/>
        <end position="40"/>
    </location>
</feature>
<feature type="disulfide bond" evidence="6">
    <location>
        <begin position="35"/>
        <end position="53"/>
    </location>
</feature>
<feature type="disulfide bond" evidence="6">
    <location>
        <begin position="47"/>
        <end position="62"/>
    </location>
</feature>
<feature type="disulfide bond" evidence="6">
    <location>
        <begin position="67"/>
        <end position="80"/>
    </location>
</feature>
<feature type="disulfide bond" evidence="6">
    <location>
        <begin position="74"/>
        <end position="93"/>
    </location>
</feature>
<feature type="disulfide bond" evidence="6">
    <location>
        <begin position="87"/>
        <end position="103"/>
    </location>
</feature>
<feature type="disulfide bond" evidence="6">
    <location>
        <begin position="109"/>
        <end position="121"/>
    </location>
</feature>
<feature type="disulfide bond" evidence="6">
    <location>
        <begin position="116"/>
        <end position="134"/>
    </location>
</feature>
<feature type="disulfide bond" evidence="6">
    <location>
        <begin position="128"/>
        <end position="143"/>
    </location>
</feature>
<feature type="disulfide bond" evidence="6">
    <location>
        <begin position="143"/>
        <end position="158"/>
    </location>
</feature>
<feature type="disulfide bond" evidence="6">
    <location>
        <begin position="153"/>
        <end position="171"/>
    </location>
</feature>
<feature type="disulfide bond" evidence="6">
    <location>
        <begin position="165"/>
        <end position="180"/>
    </location>
</feature>
<feature type="disulfide bond" evidence="6">
    <location>
        <begin position="184"/>
        <end position="196"/>
    </location>
</feature>
<feature type="disulfide bond" evidence="6">
    <location>
        <begin position="191"/>
        <end position="209"/>
    </location>
</feature>
<feature type="disulfide bond" evidence="6">
    <location>
        <begin position="203"/>
        <end position="218"/>
    </location>
</feature>
<feature type="disulfide bond" evidence="6">
    <location>
        <begin position="224"/>
        <end position="236"/>
    </location>
</feature>
<feature type="disulfide bond" evidence="6">
    <location>
        <begin position="231"/>
        <end position="249"/>
    </location>
</feature>
<feature type="disulfide bond" evidence="6">
    <location>
        <begin position="243"/>
        <end position="258"/>
    </location>
</feature>
<feature type="disulfide bond" evidence="6">
    <location>
        <begin position="268"/>
        <end position="281"/>
    </location>
</feature>
<feature type="disulfide bond" evidence="6">
    <location>
        <begin position="275"/>
        <end position="294"/>
    </location>
</feature>
<feature type="disulfide bond" evidence="6">
    <location>
        <begin position="288"/>
        <end position="307"/>
    </location>
</feature>
<feature type="disulfide bond" evidence="5">
    <location>
        <begin position="352"/>
        <end position="362"/>
    </location>
</feature>
<feature type="disulfide bond" evidence="5">
    <location>
        <begin position="358"/>
        <end position="371"/>
    </location>
</feature>
<feature type="disulfide bond" evidence="5">
    <location>
        <begin position="373"/>
        <end position="385"/>
    </location>
</feature>
<feature type="disulfide bond" evidence="6">
    <location>
        <begin position="1026"/>
        <end position="1038"/>
    </location>
</feature>
<feature type="disulfide bond" evidence="6">
    <location>
        <begin position="1033"/>
        <end position="1051"/>
    </location>
</feature>
<feature type="disulfide bond" evidence="6">
    <location>
        <begin position="1045"/>
        <end position="1060"/>
    </location>
</feature>
<feature type="disulfide bond" evidence="6">
    <location>
        <begin position="1067"/>
        <end position="1081"/>
    </location>
</feature>
<feature type="disulfide bond" evidence="6">
    <location>
        <begin position="1074"/>
        <end position="1094"/>
    </location>
</feature>
<feature type="disulfide bond" evidence="6">
    <location>
        <begin position="1088"/>
        <end position="1103"/>
    </location>
</feature>
<feature type="disulfide bond" evidence="6">
    <location>
        <begin position="1111"/>
        <end position="1123"/>
    </location>
</feature>
<feature type="disulfide bond" evidence="6">
    <location>
        <begin position="1118"/>
        <end position="1136"/>
    </location>
</feature>
<feature type="disulfide bond" evidence="6">
    <location>
        <begin position="1130"/>
        <end position="1145"/>
    </location>
</feature>
<feature type="disulfide bond" evidence="6">
    <location>
        <begin position="1151"/>
        <end position="1163"/>
    </location>
</feature>
<feature type="disulfide bond" evidence="6">
    <location>
        <begin position="1158"/>
        <end position="1176"/>
    </location>
</feature>
<feature type="disulfide bond" evidence="6">
    <location>
        <begin position="1170"/>
        <end position="1185"/>
    </location>
</feature>
<feature type="disulfide bond" evidence="6">
    <location>
        <begin position="1189"/>
        <end position="1202"/>
    </location>
</feature>
<feature type="disulfide bond" evidence="6">
    <location>
        <begin position="1196"/>
        <end position="1215"/>
    </location>
</feature>
<feature type="disulfide bond" evidence="6">
    <location>
        <begin position="1209"/>
        <end position="1224"/>
    </location>
</feature>
<feature type="disulfide bond" evidence="6">
    <location>
        <begin position="1232"/>
        <end position="1245"/>
    </location>
</feature>
<feature type="disulfide bond" evidence="6">
    <location>
        <begin position="1239"/>
        <end position="1258"/>
    </location>
</feature>
<feature type="disulfide bond" evidence="6">
    <location>
        <begin position="1252"/>
        <end position="1268"/>
    </location>
</feature>
<feature type="disulfide bond" evidence="6">
    <location>
        <begin position="1273"/>
        <end position="1285"/>
    </location>
</feature>
<feature type="disulfide bond" evidence="6">
    <location>
        <begin position="1280"/>
        <end position="1298"/>
    </location>
</feature>
<feature type="disulfide bond" evidence="6">
    <location>
        <begin position="1292"/>
        <end position="1307"/>
    </location>
</feature>
<feature type="disulfide bond" evidence="6">
    <location>
        <begin position="1314"/>
        <end position="1327"/>
    </location>
</feature>
<feature type="disulfide bond" evidence="6">
    <location>
        <begin position="1321"/>
        <end position="1340"/>
    </location>
</feature>
<feature type="disulfide bond" evidence="6">
    <location>
        <begin position="1334"/>
        <end position="1350"/>
    </location>
</feature>
<feature type="disulfide bond" evidence="6">
    <location>
        <begin position="2697"/>
        <end position="2709"/>
    </location>
</feature>
<feature type="disulfide bond" evidence="6">
    <location>
        <begin position="2704"/>
        <end position="2722"/>
    </location>
</feature>
<feature type="disulfide bond" evidence="6">
    <location>
        <begin position="2716"/>
        <end position="2733"/>
    </location>
</feature>
<feature type="disulfide bond" evidence="6">
    <location>
        <begin position="2738"/>
        <end position="2750"/>
    </location>
</feature>
<feature type="disulfide bond" evidence="6">
    <location>
        <begin position="2745"/>
        <end position="2763"/>
    </location>
</feature>
<feature type="disulfide bond" evidence="6">
    <location>
        <begin position="2757"/>
        <end position="2772"/>
    </location>
</feature>
<feature type="disulfide bond" evidence="6">
    <location>
        <begin position="2777"/>
        <end position="2790"/>
    </location>
</feature>
<feature type="disulfide bond" evidence="6">
    <location>
        <begin position="2785"/>
        <end position="2803"/>
    </location>
</feature>
<feature type="disulfide bond" evidence="6">
    <location>
        <begin position="2797"/>
        <end position="2814"/>
    </location>
</feature>
<feature type="disulfide bond" evidence="6">
    <location>
        <begin position="2819"/>
        <end position="2832"/>
    </location>
</feature>
<feature type="disulfide bond" evidence="6">
    <location>
        <begin position="2826"/>
        <end position="2845"/>
    </location>
</feature>
<feature type="disulfide bond" evidence="6">
    <location>
        <begin position="2839"/>
        <end position="2856"/>
    </location>
</feature>
<feature type="disulfide bond" evidence="6">
    <location>
        <begin position="2861"/>
        <end position="2873"/>
    </location>
</feature>
<feature type="disulfide bond" evidence="6">
    <location>
        <begin position="2868"/>
        <end position="2886"/>
    </location>
</feature>
<feature type="disulfide bond" evidence="6">
    <location>
        <begin position="2880"/>
        <end position="2896"/>
    </location>
</feature>
<feature type="disulfide bond" evidence="6">
    <location>
        <begin position="2903"/>
        <end position="2915"/>
    </location>
</feature>
<feature type="disulfide bond" evidence="6">
    <location>
        <begin position="2910"/>
        <end position="2928"/>
    </location>
</feature>
<feature type="disulfide bond" evidence="6">
    <location>
        <begin position="2922"/>
        <end position="2940"/>
    </location>
</feature>
<feature type="disulfide bond" evidence="6">
    <location>
        <begin position="2945"/>
        <end position="2962"/>
    </location>
</feature>
<feature type="disulfide bond" evidence="6">
    <location>
        <begin position="2952"/>
        <end position="2975"/>
    </location>
</feature>
<feature type="disulfide bond" evidence="6">
    <location>
        <begin position="2969"/>
        <end position="2985"/>
    </location>
</feature>
<feature type="disulfide bond" evidence="6">
    <location>
        <begin position="2990"/>
        <end position="3002"/>
    </location>
</feature>
<feature type="disulfide bond" evidence="6">
    <location>
        <begin position="2997"/>
        <end position="3015"/>
    </location>
</feature>
<feature type="disulfide bond" evidence="6">
    <location>
        <begin position="3009"/>
        <end position="3024"/>
    </location>
</feature>
<feature type="disulfide bond" evidence="6">
    <location>
        <begin position="3029"/>
        <end position="3041"/>
    </location>
</feature>
<feature type="disulfide bond" evidence="6">
    <location>
        <begin position="3036"/>
        <end position="3054"/>
    </location>
</feature>
<feature type="disulfide bond" evidence="6">
    <location>
        <begin position="3048"/>
        <end position="3065"/>
    </location>
</feature>
<feature type="disulfide bond" evidence="6">
    <location>
        <begin position="3072"/>
        <end position="3084"/>
    </location>
</feature>
<feature type="disulfide bond" evidence="6">
    <location>
        <begin position="3079"/>
        <end position="3097"/>
    </location>
</feature>
<feature type="disulfide bond" evidence="6">
    <location>
        <begin position="3091"/>
        <end position="3106"/>
    </location>
</feature>
<feature type="disulfide bond" evidence="5">
    <location>
        <begin position="3153"/>
        <end position="3164"/>
    </location>
</feature>
<feature type="disulfide bond" evidence="5">
    <location>
        <begin position="3160"/>
        <end position="3173"/>
    </location>
</feature>
<feature type="disulfide bond" evidence="5">
    <location>
        <begin position="3175"/>
        <end position="3188"/>
    </location>
</feature>
<feature type="disulfide bond" evidence="6">
    <location>
        <begin position="3510"/>
        <end position="3523"/>
    </location>
</feature>
<feature type="disulfide bond" evidence="6">
    <location>
        <begin position="3517"/>
        <end position="3536"/>
    </location>
</feature>
<feature type="disulfide bond" evidence="6">
    <location>
        <begin position="3530"/>
        <end position="3546"/>
    </location>
</feature>
<feature type="disulfide bond" evidence="6">
    <location>
        <begin position="3551"/>
        <end position="3563"/>
    </location>
</feature>
<feature type="disulfide bond" evidence="6">
    <location>
        <begin position="3558"/>
        <end position="3576"/>
    </location>
</feature>
<feature type="disulfide bond" evidence="6">
    <location>
        <begin position="3570"/>
        <end position="3587"/>
    </location>
</feature>
<feature type="disulfide bond" evidence="6">
    <location>
        <begin position="3592"/>
        <end position="3604"/>
    </location>
</feature>
<feature type="disulfide bond" evidence="6">
    <location>
        <begin position="3599"/>
        <end position="3617"/>
    </location>
</feature>
<feature type="disulfide bond" evidence="6">
    <location>
        <begin position="3611"/>
        <end position="3628"/>
    </location>
</feature>
<feature type="disulfide bond" evidence="6">
    <location>
        <begin position="3633"/>
        <end position="3645"/>
    </location>
</feature>
<feature type="disulfide bond" evidence="6">
    <location>
        <begin position="3640"/>
        <end position="3658"/>
    </location>
</feature>
<feature type="disulfide bond" evidence="6">
    <location>
        <begin position="3652"/>
        <end position="3669"/>
    </location>
</feature>
<feature type="disulfide bond" evidence="6">
    <location>
        <begin position="3676"/>
        <end position="3690"/>
    </location>
</feature>
<feature type="disulfide bond" evidence="6">
    <location>
        <begin position="3684"/>
        <end position="3703"/>
    </location>
</feature>
<feature type="disulfide bond" evidence="6">
    <location>
        <begin position="3697"/>
        <end position="3712"/>
    </location>
</feature>
<feature type="disulfide bond" evidence="6">
    <location>
        <begin position="3717"/>
        <end position="3730"/>
    </location>
</feature>
<feature type="disulfide bond" evidence="6">
    <location>
        <begin position="3725"/>
        <end position="3743"/>
    </location>
</feature>
<feature type="disulfide bond" evidence="6">
    <location>
        <begin position="3737"/>
        <end position="3752"/>
    </location>
</feature>
<feature type="disulfide bond" evidence="6">
    <location>
        <begin position="3757"/>
        <end position="3769"/>
    </location>
</feature>
<feature type="disulfide bond" evidence="6">
    <location>
        <begin position="3764"/>
        <end position="3782"/>
    </location>
</feature>
<feature type="disulfide bond" evidence="6">
    <location>
        <begin position="3776"/>
        <end position="3791"/>
    </location>
</feature>
<feature type="disulfide bond" evidence="6">
    <location>
        <begin position="3796"/>
        <end position="3808"/>
    </location>
</feature>
<feature type="disulfide bond" evidence="6">
    <location>
        <begin position="3803"/>
        <end position="3821"/>
    </location>
</feature>
<feature type="disulfide bond" evidence="6">
    <location>
        <begin position="3815"/>
        <end position="3830"/>
    </location>
</feature>
<feature type="disulfide bond" evidence="6">
    <location>
        <begin position="3840"/>
        <end position="3852"/>
    </location>
</feature>
<feature type="disulfide bond" evidence="6">
    <location>
        <begin position="3847"/>
        <end position="3865"/>
    </location>
</feature>
<feature type="disulfide bond" evidence="6">
    <location>
        <begin position="3859"/>
        <end position="3876"/>
    </location>
</feature>
<feature type="disulfide bond" evidence="6">
    <location>
        <begin position="3881"/>
        <end position="3894"/>
    </location>
</feature>
<feature type="disulfide bond" evidence="6">
    <location>
        <begin position="3889"/>
        <end position="3907"/>
    </location>
</feature>
<feature type="disulfide bond" evidence="6">
    <location>
        <begin position="3901"/>
        <end position="3918"/>
    </location>
</feature>
<feature type="disulfide bond" evidence="6">
    <location>
        <begin position="3926"/>
        <end position="3938"/>
    </location>
</feature>
<feature type="disulfide bond" evidence="6">
    <location>
        <begin position="3933"/>
        <end position="3951"/>
    </location>
</feature>
<feature type="disulfide bond" evidence="6">
    <location>
        <begin position="3945"/>
        <end position="3960"/>
    </location>
</feature>
<feature type="disulfide bond" evidence="5">
    <location>
        <begin position="3968"/>
        <end position="3977"/>
    </location>
</feature>
<feature type="disulfide bond" evidence="5">
    <location>
        <begin position="3973"/>
        <end position="3987"/>
    </location>
</feature>
<feature type="disulfide bond" evidence="5">
    <location>
        <begin position="3989"/>
        <end position="4003"/>
    </location>
</feature>
<feature type="disulfide bond" evidence="5">
    <location>
        <begin position="4009"/>
        <end position="4019"/>
    </location>
</feature>
<feature type="disulfide bond" evidence="5">
    <location>
        <begin position="4015"/>
        <end position="4028"/>
    </location>
</feature>
<feature type="disulfide bond" evidence="5">
    <location>
        <begin position="4030"/>
        <end position="4045"/>
    </location>
</feature>
<feature type="disulfide bond" evidence="5">
    <location>
        <begin position="4379"/>
        <end position="4387"/>
    </location>
</feature>
<feature type="disulfide bond" evidence="5">
    <location>
        <begin position="4381"/>
        <end position="4397"/>
    </location>
</feature>
<feature type="disulfide bond" evidence="5">
    <location>
        <begin position="4399"/>
        <end position="4408"/>
    </location>
</feature>
<reference evidence="13" key="1">
    <citation type="submission" date="2011-09" db="EMBL/GenBank/DDBJ databases">
        <authorList>
            <consortium name="Porcine genome sequencing project"/>
        </authorList>
    </citation>
    <scope>NUCLEOTIDE SEQUENCE [LARGE SCALE GENOMIC DNA]</scope>
</reference>
<reference evidence="13" key="2">
    <citation type="journal article" date="1997" name="J. Biol. Chem.">
        <title>Interaction of apolipoprotein J-amyloid beta-peptide complex with low density lipoprotein receptor-related protein-2/megalin. A mechanism to prevent pathological accumulation of amyloid beta-peptide.</title>
        <authorList>
            <person name="Hammad S.M."/>
            <person name="Ranganathan S."/>
            <person name="Loukinova E."/>
            <person name="Twal W.O."/>
            <person name="Argraves W.S."/>
        </authorList>
    </citation>
    <scope>FUNCTION</scope>
    <scope>INTERACTION WITH BETA-AMYLOID PEPTIDE 40 IN COMPLEX WITH CLU</scope>
</reference>
<reference evidence="13" key="3">
    <citation type="journal article" date="2002" name="J. Biol. Chem.">
        <title>Megalin functions as an endocytic sonic hedgehog receptor.</title>
        <authorList>
            <person name="McCarthy R.A."/>
            <person name="Barth J.L."/>
            <person name="Chintalapudi M.R."/>
            <person name="Knaak C."/>
            <person name="Argraves W.S."/>
        </authorList>
    </citation>
    <scope>INTERACTION WITH SHH</scope>
</reference>
<protein>
    <recommendedName>
        <fullName evidence="12">Low-density lipoprotein receptor-related protein 2</fullName>
        <shortName evidence="12">LRP-2</shortName>
    </recommendedName>
    <alternativeName>
        <fullName evidence="2">Glycoprotein 330</fullName>
        <shortName evidence="2">gp330</shortName>
    </alternativeName>
    <alternativeName>
        <fullName evidence="12">Megalin</fullName>
    </alternativeName>
</protein>
<organism>
    <name type="scientific">Sus scrofa</name>
    <name type="common">Pig</name>
    <dbReference type="NCBI Taxonomy" id="9823"/>
    <lineage>
        <taxon>Eukaryota</taxon>
        <taxon>Metazoa</taxon>
        <taxon>Chordata</taxon>
        <taxon>Craniata</taxon>
        <taxon>Vertebrata</taxon>
        <taxon>Euteleostomi</taxon>
        <taxon>Mammalia</taxon>
        <taxon>Eutheria</taxon>
        <taxon>Laurasiatheria</taxon>
        <taxon>Artiodactyla</taxon>
        <taxon>Suina</taxon>
        <taxon>Suidae</taxon>
        <taxon>Sus</taxon>
    </lineage>
</organism>
<gene>
    <name evidence="3" type="primary">LRP2</name>
</gene>
<keyword id="KW-0106">Calcium</keyword>
<keyword id="KW-1003">Cell membrane</keyword>
<keyword id="KW-0966">Cell projection</keyword>
<keyword id="KW-0168">Coated pit</keyword>
<keyword id="KW-1015">Disulfide bond</keyword>
<keyword id="KW-0245">EGF-like domain</keyword>
<keyword id="KW-0254">Endocytosis</keyword>
<keyword id="KW-0967">Endosome</keyword>
<keyword id="KW-0325">Glycoprotein</keyword>
<keyword id="KW-1009">Hearing</keyword>
<keyword id="KW-0472">Membrane</keyword>
<keyword id="KW-0479">Metal-binding</keyword>
<keyword id="KW-0524">Neurogenesis</keyword>
<keyword id="KW-0597">Phosphoprotein</keyword>
<keyword id="KW-0675">Receptor</keyword>
<keyword id="KW-1185">Reference proteome</keyword>
<keyword id="KW-0677">Repeat</keyword>
<keyword id="KW-0729">SH3-binding</keyword>
<keyword id="KW-0732">Signal</keyword>
<keyword id="KW-0812">Transmembrane</keyword>
<keyword id="KW-1133">Transmembrane helix</keyword>
<keyword id="KW-0813">Transport</keyword>
<proteinExistence type="evidence at protein level"/>
<evidence type="ECO:0000250" key="1">
    <source>
        <dbReference type="UniProtKB" id="A2ARV4"/>
    </source>
</evidence>
<evidence type="ECO:0000250" key="2">
    <source>
        <dbReference type="UniProtKB" id="P98158"/>
    </source>
</evidence>
<evidence type="ECO:0000250" key="3">
    <source>
        <dbReference type="UniProtKB" id="P98164"/>
    </source>
</evidence>
<evidence type="ECO:0000255" key="4"/>
<evidence type="ECO:0000255" key="5">
    <source>
        <dbReference type="PROSITE-ProRule" id="PRU00076"/>
    </source>
</evidence>
<evidence type="ECO:0000255" key="6">
    <source>
        <dbReference type="PROSITE-ProRule" id="PRU00124"/>
    </source>
</evidence>
<evidence type="ECO:0000255" key="7">
    <source>
        <dbReference type="PROSITE-ProRule" id="PRU00461"/>
    </source>
</evidence>
<evidence type="ECO:0000255" key="8">
    <source>
        <dbReference type="PROSITE-ProRule" id="PRU00498"/>
    </source>
</evidence>
<evidence type="ECO:0000256" key="9">
    <source>
        <dbReference type="SAM" id="MobiDB-lite"/>
    </source>
</evidence>
<evidence type="ECO:0000269" key="10">
    <source>
    </source>
</evidence>
<evidence type="ECO:0000269" key="11">
    <source>
    </source>
</evidence>
<evidence type="ECO:0000303" key="12">
    <source>
    </source>
</evidence>
<evidence type="ECO:0000305" key="13"/>
<dbReference type="EMBL" id="GL881906">
    <property type="status" value="NOT_ANNOTATED_CDS"/>
    <property type="molecule type" value="Genomic_DNA"/>
</dbReference>
<dbReference type="RefSeq" id="XP_020931970.1">
    <property type="nucleotide sequence ID" value="XM_021076311.1"/>
</dbReference>
<dbReference type="FunCoup" id="C0HL13">
    <property type="interactions" value="215"/>
</dbReference>
<dbReference type="STRING" id="9823.ENSSSCP00000049411"/>
<dbReference type="GlyCosmos" id="C0HL13">
    <property type="glycosylation" value="41 sites, No reported glycans"/>
</dbReference>
<dbReference type="GlyGen" id="C0HL13">
    <property type="glycosylation" value="43 sites, 1 O-linked glycan (1 site)"/>
</dbReference>
<dbReference type="PaxDb" id="9823-ENSSSCP00000016881"/>
<dbReference type="GeneID" id="100519689"/>
<dbReference type="eggNOG" id="KOG1215">
    <property type="taxonomic scope" value="Eukaryota"/>
</dbReference>
<dbReference type="InParanoid" id="C0HL13"/>
<dbReference type="OrthoDB" id="21182at2759"/>
<dbReference type="Proteomes" id="UP000008227">
    <property type="component" value="Unplaced"/>
</dbReference>
<dbReference type="Proteomes" id="UP000314985">
    <property type="component" value="Unplaced"/>
</dbReference>
<dbReference type="Proteomes" id="UP000694570">
    <property type="component" value="Unplaced"/>
</dbReference>
<dbReference type="Proteomes" id="UP000694571">
    <property type="component" value="Unplaced"/>
</dbReference>
<dbReference type="Proteomes" id="UP000694720">
    <property type="component" value="Unplaced"/>
</dbReference>
<dbReference type="Proteomes" id="UP000694722">
    <property type="component" value="Unplaced"/>
</dbReference>
<dbReference type="Proteomes" id="UP000694723">
    <property type="component" value="Unplaced"/>
</dbReference>
<dbReference type="Proteomes" id="UP000694724">
    <property type="component" value="Unplaced"/>
</dbReference>
<dbReference type="Proteomes" id="UP000694725">
    <property type="component" value="Unplaced"/>
</dbReference>
<dbReference type="Proteomes" id="UP000694726">
    <property type="component" value="Unplaced"/>
</dbReference>
<dbReference type="Proteomes" id="UP000694727">
    <property type="component" value="Unplaced"/>
</dbReference>
<dbReference type="Proteomes" id="UP000694728">
    <property type="component" value="Unplaced"/>
</dbReference>
<dbReference type="GO" id="GO:0016324">
    <property type="term" value="C:apical plasma membrane"/>
    <property type="evidence" value="ECO:0000250"/>
    <property type="project" value="UniProtKB"/>
</dbReference>
<dbReference type="GO" id="GO:0030424">
    <property type="term" value="C:axon"/>
    <property type="evidence" value="ECO:0000250"/>
    <property type="project" value="UniProtKB"/>
</dbReference>
<dbReference type="GO" id="GO:0031526">
    <property type="term" value="C:brush border membrane"/>
    <property type="evidence" value="ECO:0000250"/>
    <property type="project" value="UniProtKB"/>
</dbReference>
<dbReference type="GO" id="GO:0005905">
    <property type="term" value="C:clathrin-coated pit"/>
    <property type="evidence" value="ECO:0007669"/>
    <property type="project" value="UniProtKB-SubCell"/>
</dbReference>
<dbReference type="GO" id="GO:0030425">
    <property type="term" value="C:dendrite"/>
    <property type="evidence" value="ECO:0000250"/>
    <property type="project" value="UniProtKB"/>
</dbReference>
<dbReference type="GO" id="GO:0031904">
    <property type="term" value="C:endosome lumen"/>
    <property type="evidence" value="ECO:0007669"/>
    <property type="project" value="UniProtKB-SubCell"/>
</dbReference>
<dbReference type="GO" id="GO:0009897">
    <property type="term" value="C:external side of plasma membrane"/>
    <property type="evidence" value="ECO:0000250"/>
    <property type="project" value="UniProtKB"/>
</dbReference>
<dbReference type="GO" id="GO:0043235">
    <property type="term" value="C:receptor complex"/>
    <property type="evidence" value="ECO:0000250"/>
    <property type="project" value="UniProtKB"/>
</dbReference>
<dbReference type="GO" id="GO:0005509">
    <property type="term" value="F:calcium ion binding"/>
    <property type="evidence" value="ECO:0000250"/>
    <property type="project" value="UniProtKB"/>
</dbReference>
<dbReference type="GO" id="GO:0051087">
    <property type="term" value="F:protein-folding chaperone binding"/>
    <property type="evidence" value="ECO:0000353"/>
    <property type="project" value="ARUK-UCL"/>
</dbReference>
<dbReference type="GO" id="GO:0017124">
    <property type="term" value="F:SH3 domain binding"/>
    <property type="evidence" value="ECO:0007669"/>
    <property type="project" value="UniProtKB-KW"/>
</dbReference>
<dbReference type="GO" id="GO:0060982">
    <property type="term" value="P:coronary artery morphogenesis"/>
    <property type="evidence" value="ECO:0000250"/>
    <property type="project" value="UniProtKB"/>
</dbReference>
<dbReference type="GO" id="GO:1904447">
    <property type="term" value="P:folate import across plasma membrane"/>
    <property type="evidence" value="ECO:0000250"/>
    <property type="project" value="UniProtKB"/>
</dbReference>
<dbReference type="GO" id="GO:0008584">
    <property type="term" value="P:male gonad development"/>
    <property type="evidence" value="ECO:0000250"/>
    <property type="project" value="UniProtKB"/>
</dbReference>
<dbReference type="GO" id="GO:0030001">
    <property type="term" value="P:metal ion transport"/>
    <property type="evidence" value="ECO:0000250"/>
    <property type="project" value="UniProtKB"/>
</dbReference>
<dbReference type="GO" id="GO:0030514">
    <property type="term" value="P:negative regulation of BMP signaling pathway"/>
    <property type="evidence" value="ECO:0000250"/>
    <property type="project" value="UniProtKB"/>
</dbReference>
<dbReference type="GO" id="GO:0001843">
    <property type="term" value="P:neural tube closure"/>
    <property type="evidence" value="ECO:0000250"/>
    <property type="project" value="UniProtKB"/>
</dbReference>
<dbReference type="GO" id="GO:0140058">
    <property type="term" value="P:neuron projection arborization"/>
    <property type="evidence" value="ECO:0000250"/>
    <property type="project" value="UniProtKB"/>
</dbReference>
<dbReference type="GO" id="GO:0003148">
    <property type="term" value="P:outflow tract septum morphogenesis"/>
    <property type="evidence" value="ECO:0000250"/>
    <property type="project" value="UniProtKB"/>
</dbReference>
<dbReference type="GO" id="GO:1905167">
    <property type="term" value="P:positive regulation of lysosomal protein catabolic process"/>
    <property type="evidence" value="ECO:0000314"/>
    <property type="project" value="ARUK-UCL"/>
</dbReference>
<dbReference type="GO" id="GO:0050769">
    <property type="term" value="P:positive regulation of neurogenesis"/>
    <property type="evidence" value="ECO:0000250"/>
    <property type="project" value="UniProtKB"/>
</dbReference>
<dbReference type="GO" id="GO:0070447">
    <property type="term" value="P:positive regulation of oligodendrocyte progenitor proliferation"/>
    <property type="evidence" value="ECO:0000250"/>
    <property type="project" value="UniProtKB"/>
</dbReference>
<dbReference type="GO" id="GO:0061156">
    <property type="term" value="P:pulmonary artery morphogenesis"/>
    <property type="evidence" value="ECO:0000250"/>
    <property type="project" value="UniProtKB"/>
</dbReference>
<dbReference type="GO" id="GO:0006898">
    <property type="term" value="P:receptor-mediated endocytosis"/>
    <property type="evidence" value="ECO:0000316"/>
    <property type="project" value="ARUK-UCL"/>
</dbReference>
<dbReference type="GO" id="GO:0003139">
    <property type="term" value="P:secondary heart field specification"/>
    <property type="evidence" value="ECO:0000250"/>
    <property type="project" value="UniProtKB"/>
</dbReference>
<dbReference type="GO" id="GO:0007605">
    <property type="term" value="P:sensory perception of sound"/>
    <property type="evidence" value="ECO:0000250"/>
    <property type="project" value="UniProtKB"/>
</dbReference>
<dbReference type="GO" id="GO:0060068">
    <property type="term" value="P:vagina development"/>
    <property type="evidence" value="ECO:0000250"/>
    <property type="project" value="UniProtKB"/>
</dbReference>
<dbReference type="GO" id="GO:0003223">
    <property type="term" value="P:ventricular compact myocardium morphogenesis"/>
    <property type="evidence" value="ECO:0000250"/>
    <property type="project" value="UniProtKB"/>
</dbReference>
<dbReference type="CDD" id="cd00054">
    <property type="entry name" value="EGF_CA"/>
    <property type="match status" value="1"/>
</dbReference>
<dbReference type="CDD" id="cd00112">
    <property type="entry name" value="LDLa"/>
    <property type="match status" value="35"/>
</dbReference>
<dbReference type="FunFam" id="4.10.400.10:FF:000232">
    <property type="entry name" value="Basement membrane-specific heparan sulfate proteoglycan core protein-like Protein"/>
    <property type="match status" value="1"/>
</dbReference>
<dbReference type="FunFam" id="2.10.25.10:FF:000017">
    <property type="entry name" value="latent-transforming growth factor beta-binding protein 4 isoform X1"/>
    <property type="match status" value="1"/>
</dbReference>
<dbReference type="FunFam" id="2.120.10.30:FF:000049">
    <property type="entry name" value="LDL receptor related protein 2"/>
    <property type="match status" value="1"/>
</dbReference>
<dbReference type="FunFam" id="4.10.400.10:FF:000151">
    <property type="entry name" value="LDL receptor related protein 2"/>
    <property type="match status" value="1"/>
</dbReference>
<dbReference type="FunFam" id="4.10.400.10:FF:000153">
    <property type="entry name" value="LDL receptor related protein 2"/>
    <property type="match status" value="1"/>
</dbReference>
<dbReference type="FunFam" id="4.10.400.10:FF:000158">
    <property type="entry name" value="LDL receptor related protein 2"/>
    <property type="match status" value="1"/>
</dbReference>
<dbReference type="FunFam" id="2.10.25.10:FF:000009">
    <property type="entry name" value="Low-density lipoprotein receptor isoform 1"/>
    <property type="match status" value="1"/>
</dbReference>
<dbReference type="FunFam" id="4.10.400.10:FF:000134">
    <property type="entry name" value="Low-density lipoprotein RecePtor related"/>
    <property type="match status" value="1"/>
</dbReference>
<dbReference type="FunFam" id="4.10.400.10:FF:000001">
    <property type="entry name" value="Low-density lipoprotein receptor-related protein 1"/>
    <property type="match status" value="2"/>
</dbReference>
<dbReference type="FunFam" id="4.10.400.10:FF:000002">
    <property type="entry name" value="Low-density lipoprotein receptor-related protein 1"/>
    <property type="match status" value="1"/>
</dbReference>
<dbReference type="FunFam" id="4.10.400.10:FF:000009">
    <property type="entry name" value="Low-density lipoprotein receptor-related protein 1"/>
    <property type="match status" value="1"/>
</dbReference>
<dbReference type="FunFam" id="4.10.400.10:FF:000011">
    <property type="entry name" value="Low-density lipoprotein receptor-related protein 1"/>
    <property type="match status" value="2"/>
</dbReference>
<dbReference type="FunFam" id="4.10.400.10:FF:000005">
    <property type="entry name" value="low-density lipoprotein receptor-related protein 1B"/>
    <property type="match status" value="1"/>
</dbReference>
<dbReference type="FunFam" id="2.10.25.10:FF:000805">
    <property type="entry name" value="Low-density lipoprotein receptor-related protein 2"/>
    <property type="match status" value="1"/>
</dbReference>
<dbReference type="FunFam" id="2.120.10.30:FF:000035">
    <property type="entry name" value="Low-density lipoprotein receptor-related protein 2"/>
    <property type="match status" value="1"/>
</dbReference>
<dbReference type="FunFam" id="2.120.10.30:FF:000040">
    <property type="entry name" value="Low-density lipoprotein receptor-related protein 2"/>
    <property type="match status" value="1"/>
</dbReference>
<dbReference type="FunFam" id="2.120.10.30:FF:000051">
    <property type="entry name" value="Low-density lipoprotein receptor-related protein 2"/>
    <property type="match status" value="1"/>
</dbReference>
<dbReference type="FunFam" id="2.120.10.30:FF:000056">
    <property type="entry name" value="Low-density lipoprotein receptor-related protein 2"/>
    <property type="match status" value="1"/>
</dbReference>
<dbReference type="FunFam" id="2.120.10.30:FF:000057">
    <property type="entry name" value="Low-density lipoprotein receptor-related protein 2"/>
    <property type="match status" value="1"/>
</dbReference>
<dbReference type="FunFam" id="4.10.400.10:FF:000034">
    <property type="entry name" value="Low-density lipoprotein receptor-related protein 2"/>
    <property type="match status" value="5"/>
</dbReference>
<dbReference type="FunFam" id="4.10.400.10:FF:000045">
    <property type="entry name" value="Low-density lipoprotein receptor-related protein 2"/>
    <property type="match status" value="2"/>
</dbReference>
<dbReference type="FunFam" id="4.10.400.10:FF:000108">
    <property type="entry name" value="Low-density lipoprotein receptor-related protein 2"/>
    <property type="match status" value="1"/>
</dbReference>
<dbReference type="FunFam" id="4.10.400.10:FF:000147">
    <property type="entry name" value="Low-density lipoprotein receptor-related protein 2"/>
    <property type="match status" value="2"/>
</dbReference>
<dbReference type="FunFam" id="4.10.400.10:FF:000222">
    <property type="entry name" value="Low-density lipoprotein receptor-related protein 2"/>
    <property type="match status" value="1"/>
</dbReference>
<dbReference type="FunFam" id="4.10.400.10:FF:000078">
    <property type="entry name" value="low-density lipoprotein receptor-related protein 2"/>
    <property type="match status" value="2"/>
</dbReference>
<dbReference type="FunFam" id="4.10.400.10:FF:000121">
    <property type="entry name" value="low-density lipoprotein receptor-related protein 2"/>
    <property type="match status" value="1"/>
</dbReference>
<dbReference type="FunFam" id="2.120.10.30:FF:000008">
    <property type="entry name" value="Low-density lipoprotein receptor-related protein 4"/>
    <property type="match status" value="1"/>
</dbReference>
<dbReference type="FunFam" id="2.120.10.30:FF:000241">
    <property type="entry name" value="Low-density lipoprotein receptor-related protein 6"/>
    <property type="match status" value="1"/>
</dbReference>
<dbReference type="FunFam" id="2.10.25.10:FF:000240">
    <property type="entry name" value="Vitamin K-dependent protein S"/>
    <property type="match status" value="1"/>
</dbReference>
<dbReference type="Gene3D" id="4.10.1220.10">
    <property type="entry name" value="EGF-type module"/>
    <property type="match status" value="1"/>
</dbReference>
<dbReference type="Gene3D" id="2.10.25.10">
    <property type="entry name" value="Laminin"/>
    <property type="match status" value="7"/>
</dbReference>
<dbReference type="Gene3D" id="4.10.400.10">
    <property type="entry name" value="Low-density Lipoprotein Receptor"/>
    <property type="match status" value="35"/>
</dbReference>
<dbReference type="Gene3D" id="2.120.10.30">
    <property type="entry name" value="TolB, C-terminal domain"/>
    <property type="match status" value="8"/>
</dbReference>
<dbReference type="InterPro" id="IPR011042">
    <property type="entry name" value="6-blade_b-propeller_TolB-like"/>
</dbReference>
<dbReference type="InterPro" id="IPR026823">
    <property type="entry name" value="cEGF"/>
</dbReference>
<dbReference type="InterPro" id="IPR001881">
    <property type="entry name" value="EGF-like_Ca-bd_dom"/>
</dbReference>
<dbReference type="InterPro" id="IPR000742">
    <property type="entry name" value="EGF-like_dom"/>
</dbReference>
<dbReference type="InterPro" id="IPR000152">
    <property type="entry name" value="EGF-type_Asp/Asn_hydroxyl_site"/>
</dbReference>
<dbReference type="InterPro" id="IPR018097">
    <property type="entry name" value="EGF_Ca-bd_CS"/>
</dbReference>
<dbReference type="InterPro" id="IPR056588">
    <property type="entry name" value="EGF_LRP2"/>
</dbReference>
<dbReference type="InterPro" id="IPR009030">
    <property type="entry name" value="Growth_fac_rcpt_cys_sf"/>
</dbReference>
<dbReference type="InterPro" id="IPR036055">
    <property type="entry name" value="LDL_receptor-like_sf"/>
</dbReference>
<dbReference type="InterPro" id="IPR051221">
    <property type="entry name" value="LDLR-related"/>
</dbReference>
<dbReference type="InterPro" id="IPR023415">
    <property type="entry name" value="LDLR_class-A_CS"/>
</dbReference>
<dbReference type="InterPro" id="IPR000033">
    <property type="entry name" value="LDLR_classB_rpt"/>
</dbReference>
<dbReference type="InterPro" id="IPR002172">
    <property type="entry name" value="LDrepeatLR_classA_rpt"/>
</dbReference>
<dbReference type="InterPro" id="IPR049883">
    <property type="entry name" value="NOTCH1_EGF-like"/>
</dbReference>
<dbReference type="PANTHER" id="PTHR22722">
    <property type="entry name" value="LOW-DENSITY LIPOPROTEIN RECEPTOR-RELATED PROTEIN 2-RELATED"/>
    <property type="match status" value="1"/>
</dbReference>
<dbReference type="PANTHER" id="PTHR22722:SF14">
    <property type="entry name" value="MEGALIN, ISOFORM A"/>
    <property type="match status" value="1"/>
</dbReference>
<dbReference type="Pfam" id="PF12662">
    <property type="entry name" value="cEGF"/>
    <property type="match status" value="1"/>
</dbReference>
<dbReference type="Pfam" id="PF07645">
    <property type="entry name" value="EGF_CA"/>
    <property type="match status" value="2"/>
</dbReference>
<dbReference type="Pfam" id="PF24468">
    <property type="entry name" value="EGF_LRP2"/>
    <property type="match status" value="1"/>
</dbReference>
<dbReference type="Pfam" id="PF14670">
    <property type="entry name" value="FXa_inhibition"/>
    <property type="match status" value="2"/>
</dbReference>
<dbReference type="Pfam" id="PF00057">
    <property type="entry name" value="Ldl_recept_a"/>
    <property type="match status" value="35"/>
</dbReference>
<dbReference type="Pfam" id="PF00058">
    <property type="entry name" value="Ldl_recept_b"/>
    <property type="match status" value="14"/>
</dbReference>
<dbReference type="PRINTS" id="PR00261">
    <property type="entry name" value="LDLRECEPTOR"/>
</dbReference>
<dbReference type="SMART" id="SM00181">
    <property type="entry name" value="EGF"/>
    <property type="match status" value="27"/>
</dbReference>
<dbReference type="SMART" id="SM00179">
    <property type="entry name" value="EGF_CA"/>
    <property type="match status" value="10"/>
</dbReference>
<dbReference type="SMART" id="SM00192">
    <property type="entry name" value="LDLa"/>
    <property type="match status" value="36"/>
</dbReference>
<dbReference type="SMART" id="SM00135">
    <property type="entry name" value="LY"/>
    <property type="match status" value="38"/>
</dbReference>
<dbReference type="SUPFAM" id="SSF57196">
    <property type="entry name" value="EGF/Laminin"/>
    <property type="match status" value="6"/>
</dbReference>
<dbReference type="SUPFAM" id="SSF57184">
    <property type="entry name" value="Growth factor receptor domain"/>
    <property type="match status" value="2"/>
</dbReference>
<dbReference type="SUPFAM" id="SSF57424">
    <property type="entry name" value="LDL receptor-like module"/>
    <property type="match status" value="36"/>
</dbReference>
<dbReference type="SUPFAM" id="SSF63825">
    <property type="entry name" value="YWTD domain"/>
    <property type="match status" value="8"/>
</dbReference>
<dbReference type="PROSITE" id="PS00010">
    <property type="entry name" value="ASX_HYDROXYL"/>
    <property type="match status" value="4"/>
</dbReference>
<dbReference type="PROSITE" id="PS00022">
    <property type="entry name" value="EGF_1"/>
    <property type="match status" value="1"/>
</dbReference>
<dbReference type="PROSITE" id="PS01186">
    <property type="entry name" value="EGF_2"/>
    <property type="match status" value="8"/>
</dbReference>
<dbReference type="PROSITE" id="PS50026">
    <property type="entry name" value="EGF_3"/>
    <property type="match status" value="5"/>
</dbReference>
<dbReference type="PROSITE" id="PS01187">
    <property type="entry name" value="EGF_CA"/>
    <property type="match status" value="3"/>
</dbReference>
<dbReference type="PROSITE" id="PS01209">
    <property type="entry name" value="LDLRA_1"/>
    <property type="match status" value="29"/>
</dbReference>
<dbReference type="PROSITE" id="PS50068">
    <property type="entry name" value="LDLRA_2"/>
    <property type="match status" value="36"/>
</dbReference>
<dbReference type="PROSITE" id="PS51120">
    <property type="entry name" value="LDLRB"/>
    <property type="match status" value="35"/>
</dbReference>
<comment type="function">
    <text evidence="1 2 3 11">Multiligand endocytic receptor (By similarity). Acts together with CUBN to mediate endocytosis of high-density lipoproteins (By similarity). Mediates receptor-mediated uptake of polybasic drugs such as aprotinin, aminoglycosides and polymyxin B (By similarity). In the kidney, mediates the tubular uptake and clearance of leptin (By similarity). Also mediates transport of leptin across the blood-brain barrier through endocytosis at the choroid plexus epithelium (By similarity). Endocytosis of leptin in neuronal cells is required for hypothalamic leptin signaling and leptin-mediated regulation of feeding and body weight (By similarity). Mediates endocytosis and subsequent lysosomal degradation of CST3 in kidney proximal tubule cells (By similarity). Mediates renal uptake of 25-hydroxyvitamin D3 in complex with the vitamin D3 transporter GC/DBP (By similarity). Mediates renal uptake of metallothionein-bound heavy metals (By similarity). Together with CUBN, mediates renal reabsorption of myoglobin (By similarity). Mediates renal uptake and subsequent lysosomal degradation of APOM (By similarity). Plays a role in kidney selenium homeostasis by mediating renal endocytosis of selenoprotein SEPP1 (By similarity). Mediates renal uptake of the antiapoptotic protein BIRC5/survivin which may be important for functional integrity of the kidney (By similarity). Mediates renal uptake of matrix metalloproteinase MMP2 in complex with metalloproteinase inhibitor TIMP1 (By similarity). Mediates endocytosis of Sonic hedgehog protein N-product (ShhN), the active product of SHH (By similarity). Also mediates ShhN transcytosis (By similarity). In the embryonic neuroepithelium, mediates endocytic uptake and degradation of BMP4, is required for correct SHH localization in the ventral neural tube and plays a role in patterning of the ventral telencephalon (By similarity). Required at the onset of neurulation to sequester SHH on the apical surface of neuroepithelial cells of the rostral diencephalon ventral midline and to control PTCH1-dependent uptake and intracellular trafficking of SHH (By similarity). During neurulation, required in neuroepithelial cells for uptake of folate bound to the folate receptor FOLR1 which is necessary for neural tube closure (By similarity). In the adult brain, negatively regulates BMP signaling in the subependymal zone which enables neurogenesis to proceed (By similarity). In astrocytes, mediates endocytosis of ALB which is required for the synthesis of the neurotrophic factor oleic acid (By similarity). Involved in neurite branching (By similarity). During optic nerve development, required for SHH-mediated migration and proliferation of oligodendrocyte precursor cells (By similarity). Mediates endocytic uptake and clearance of SHH in the retinal margin which protects retinal progenitor cells from mitogenic stimuli and keeps them quiescent (By similarity). Plays a role in reproductive organ development by mediating uptake in reproductive tissues of androgen and estrogen bound to the sex hormone binding protein SHBG (By similarity). Mediates endocytosis of angiotensin-2 (By similarity). Also mediates endocytosis of angiotensis 1-7 (By similarity). Binds to the complex composed of beta-amyloid protein 40 and CLU/APOJ and mediates its endocytosis and lysosomal degradation (PubMed:9228033). Required for embryonic heart development (By similarity). Required for normal hearing, possibly through interaction with estrogen in the inner ear (By similarity).</text>
</comment>
<comment type="subunit">
    <text evidence="1 2 3 10 11">Binds plasminogen, extracellular matrix components, plasminogen activator-plasminogen activator inhibitor type I complex, apolipoprotein E-enriched beta-VLDL, lipoprotein lipase, lactoferrin, CLU/clusterin and calcium (By similarity). Forms a multimeric complex together with LRPAP1 (By similarity). Interacts (via PxLPxI/L motif) with ANKRA2 (via ankyrin repeats) (By similarity). Interacts with LRP2BP (By similarity). Interacts (via NPXY motif) with DAB2; the interaction is not affected by tyrosine phosphorylation of the NPXY motif (By similarity). Interacts with MB (By similarity). Interacts with BMP4 (By similarity). Interacts with the Sonic hedgehog protein N-product which is the active product of SHH (PubMed:11964399). Interacts with CST3 in a calcium-dependent manner (By similarity). Interacts with the vitamin-D binding protein GC/DBP (By similarity). Interacts with sex hormone-binding protein SHBG (By similarity). Interacts with angiotensin-2 (By similarity). Also interacts with angiotensin 1-7 (By similarity). Interacts with APOM (By similarity). Interacts with selenoprotein SEPP1 (By similarity). Interacts with LEP (By similarity). Interacts with ALB (By similarity). Interacts with the antiapoptotic protein BIRC5/survivin (By similarity). Interacts with matrix metalloproteinase MMP2 in complex with metalloproteinase inhibitor TIMP1 (By similarity). In neurons, forms a trimeric complex with APP and APPB1/FE65 (By similarity). Interacts with LDLRAP1/ARH; mediates trafficking of LRP2 to the endocytic recycling compartment (By similarity). Does not interact with beta-amyloid protein 40 alone but interacts with the complex composed of beta-amyloid protein 40 and CLU/APOJ (PubMed:9228033). Interacts with MDK (By similarity).</text>
</comment>
<comment type="subcellular location">
    <subcellularLocation>
        <location evidence="2">Apical cell membrane</location>
        <topology evidence="4">Single-pass type I membrane protein</topology>
    </subcellularLocation>
    <subcellularLocation>
        <location evidence="2">Endosome lumen</location>
    </subcellularLocation>
    <subcellularLocation>
        <location evidence="1">Membrane</location>
        <location evidence="1">Clathrin-coated pit</location>
    </subcellularLocation>
    <subcellularLocation>
        <location evidence="1">Cell projection</location>
        <location evidence="1">Dendrite</location>
    </subcellularLocation>
    <subcellularLocation>
        <location evidence="1">Cell projection</location>
        <location evidence="1">Axon</location>
    </subcellularLocation>
    <text evidence="2">Localizes to brush border membranes in the kidney. In the endolymphatic sac of the inner ear, located in the lumen of endosomes as a soluble form.</text>
</comment>
<comment type="domain">
    <text evidence="2">Two overlapping PxLPxI/L motifs mediate interaction with ankyrin repeats of ANKRA2.</text>
</comment>
<comment type="domain">
    <text evidence="2">The cytoplasmic domain is required for sorting to the apical cell membrane.</text>
</comment>
<comment type="PTM">
    <text evidence="2">A fraction undergoes proteolytic cleavage of the extracellular domain at the cell membrane to generate a cytoplasmic tail fragment. This is internalized into the early endosome from where it trafficks in an LDLRAP1/ARH-dependent manner to the endocytic recycling compartment (ERC). In the ERC, it is further cleaved by gamma-secretase to release a fragment which translocates to the nucleus and mediates transcriptional repression.</text>
</comment>
<comment type="PTM">
    <text evidence="1">N-glycosylation is required for ligand binding.</text>
</comment>
<comment type="similarity">
    <text evidence="13">Belongs to the LDLR family.</text>
</comment>
<accession>C0HL13</accession>
<sequence length="4652" mass="521302">MERWAAAAACTLLLAFAACLAPASGRECLGNEFRCSNGHCITESWRCDGTRDCLDGSDEIGCPPSTCGSTQFHCENEDVCIPLYWVCDGEEDCSNGADEHQRCPPGRTCSSHHFTCTNGECIPVEYRCDHSTDCLDGTDEINCRYPVCQQQTCHNGACYNTSQRCDGEIDCRDASDELNCTQRCLRNEFQCGSGECIPRDYVCDHDPDCSDSSDEHSCSVYQPCKGNEFACSNGFCINQNWVCDGMADCLDNSDEDGCESSIIRTHECYPNEWACPEDGKCIPLSRVCDGIADCPRGGDENKQGRVCDVNMCPSLGCEYQCHKSPSGGTCNCPPGFIVNKNNTRSCVDFNDCQIWGICDHFCEDRIGHHQCFCAEGYVLEHEQHCRANSSSGQAFVIFSNGRNLLLGDIQGQSFEYLVRSQNRGSPVGVDFHYRLSKVFWTDTMQNKVFSLDIDGLVIREVLSVSIEDPENLAVDWINNKLYIVETNVNRIDLANLDGSHRITLITENLGRPRGIALDPTVGYLFFSDWQSISGQPKIERAYMDGSNRKDLVKIKLGWPGGITLDLVAKRVYWVDARFDYIETVTYDGTQRKTVLQGGSNIPHPFGITLFEDNLFFTDWTKFSVMKANKFTETNPRVYFRSSTRPFGVTVYHAIRQPSVRNPCGNNNGGCEHICVLSHRTDNGGLGYRCKCKLGYIPGLDDYSCVATKQFLFFSTDVAVRGIPLTPSNQKDVILPVTGSPSVFVGIDFDAKENAIFFSDTSKDMIFRQKINGTGREIITANRVPSVESLSFDWISRNLYWTDASYRSVTVMRLADKSRRTIVQNLNNPRSIVVHPIAGYIFFTDWFRPAKILRAWSDGSHMLPIVNTTLGWPNGLAIDWGSSRLYWVDAFLDKIEHTTFDGLDRRALNHLQQMTHPFGLTVFGEYVYFTDWRQRSIVRVRKTDGGEMTILRNGVGNVMRVKIFETSIQVGSNACNRPTNPNGDCSHFCFPVPNLQRVCGCPYGMRLASNRLNCVNDSSREPPMEQCGALSFPCNNGRCVPLHYRCDGVDDCHDNSDEVQCGAFNTSCAPSAFACGHGGGECIPSYWRCDNHNDCVDGSDEQNCSSQAQTSCRADYFTCDNHMCIPKNWLCDTDNDCGDGSDEKRCDLGETCSPTQFHCPNHRCIDLAFVCDGDKDCADGSDESACVINCTDSQFKCVGSNKCISNTYRCDGVSDCSDHSDEIDCPTRPPGMCRQDEFQCREDGICIPDSWECDGHPDCLTGSDEHSGCPPRTCPXSRFLCANGNCIFRDWLCDGDNDCRDMSDEKDCPTQPFLCPSWQWQCPGHSICVNLSSVCDGISDCPHGTDESPLCNQESCLHSNGGCTHLCIQGPFGAQCECPLGYRLANDSKTCEDIDECRIPGFCSQHCYNMRGSFRCWCDIEYSLEADQRTCKATASESLLLVVANQNQLIADNITKSMDHMRALIQDGSHIVAVDFDSVRGRIFWSDKTLGKIFSAFQNGTDRKPVFNSGNIMTESIAVDWVGRNLYWADFALETIEVSKLDGTLRTVLLSENVTSPRGIVLDPRVNDRVIFWTNWGSYPRIERASMDGEMRTVIVQQKIFWPNGLAIDYPTRLLYFADGNLDHIHFCKYDGSNRKQVISSGEGSGHLFAITIFEDSIYWTDRNSQDVRKANKWHGGNESVVLSASQPLGIVAVHPARQPTARNPCTIARCSHLCLLSSERLYSCACPSGWSLSQDSMTCVRDDDAFLIVVRRTTIFGISLNPEVNTDNAMVPISGMESGYDVEVDYSEQFLYYADYPGEIYKVKTDGTNRTLFDPLTKVGSTTTLALDWLSRNLYYTDSEARSIKVLTLRGNVRYRKTLITNDGTTLGIGVPVSITVDPAKGKLYWSDLGIEGRVPAKIACANMDGTSRKNLFTGHLENVGFITLDIQEQKLYWTVRSYISIERGNVDGTDRMSLVNSLPRPRGIAVYGPYLYYADEQNQVIERVDKATGANKVVVREGLPNLRALRIYRRRGSESSNGCSNNINACQQICLPVPGGLFTCACAVGFKLNPDNRTCSSHDSFIVVSMLTAIRGYSLDVSDHSEAMVPVELEGQNTLHVDVDVSSGFVYWADFNRNVQTDNAIRRIKIDGSGFADIITDGIGKDGIRGIAVDWVAGNLYFINAFVSETLIEVLRINTTHRRVLLKTTEDVPRDIVVDPKNRYLFWSDIGQTPKIERSFLDCTNRTVLVSEMVASPRGLALDHNSGYIYWVDDSLDLIARVSIHGGNSETIRFGSSYPTPYAIAVFGNSIIWVDRDLKTIFQASKEPFKTDPPTVIRNNINWLRDVTVFDKQAQPRSPAEVNYNPCLQNNGGCTHFCFALPQLRTPKCGCAFGVLQGDGRSCAISREDFLIYALDNSVRSLHFDPEDYNVPFTAISVEETAVAVDYDSIDNRIYFTQVLASGKGQISYISLNSRSHSPTVVISNLGSPDGIAFDWIGRRIYYSDYTNQTIQSMNMDGSRRTVVARVTKPRAIVLDPCQGYMYWTDWSTNAQIERATMAGNFRNSIVNRDLVWPNGLTLDYKENLLYWADASLQKIERSSVTGTGREVIVSRANAPFGLTVYGQYIYWTDWLTQKIYRANKYDGSGQTAMTTALPFLPNGIRAVVNNQELCHNPCGRFNGGCSHVCAPGPNGPECKCPHEGRWYLANNNKYCIVDDGKRCNSTQFTCLSGYCILESLKCNDIDECGDSSDELETLCAYHTCPPTSFTCANGRCIQRHFRCDHYNDCGDNSDESGCRFRSCNITTEFSCNNGKCLPLQLVCDGIDHCNDNNTSDEKNCAQHTCLPDYIKCANSNVCIPRLFLCDGDNDCGDMSDENPIYCVSPTCKNNEFQCTSGSCIPELWHCDGERDCDDGSDEPATCVYSPSTCSSDEFKCDNNRCIQMEWICDGDNDCGDMSDEDGRHHCENHNCSSYAFHCVNSAPPSRRCIPLSWVCDGDADCSDAYDEHQNCTRRNCSGTEFRCSNGLCIPNWFRCDRRNDCGDYSDERNCKYPACDENLFTCQNGICTYKSYICDGENDCGDNSDELEHLCHKEETTCPPHQFRCNNGNCIEMVKVCNHQADCSDNSDEERCGVNECNDPLLSGCDQNCTDTLTSFYCSCKPGYRLLPDKRTCVDIDECKETPSVCSQKCENLLGSYICKCAPGYTREPDGRSCRQNTNIEPYLIFSNRYYLRNLTIDGHIYSLILQGLGNAVALDFDRVEERLYWLDIENKVIERMFLNKTNREAVIKYNIPGTESLAVDWVTRKLYWSDSYLNCLSVSDLNGRYRRKLAEHCVDVNNTFCFDKPRGIALHPRYGYVYWADWTDRAYIGRVGMDGRNKSLIISSKIKWPNGITIDYTNDLLYWTDAHLGYIEYSDLEGSHRHTVYETGTLSHPFAVTIFEDTIYWTDWNTKTVEKGNKYNGSNREVLVNTTHRPYDIHVYHPYRQPFVSNPCGTNNGGCSHLCLIKAGGNGFTCECPDNFYTIQHGDTTQCLPMCSSTQFLCANNEMCIPIWWKCDGQKDCLDGSDEPNTCPQRFCRLGQFQCSDGNCTSSNFICNARQDCPDGSDEDAVLCEHHRCESNQWQCANKRCIPESWQCDSLNDCGDNSDEDSSHCARRTCLPGYFKCANGHCIPQSWKCDVDNDCGDYSDEPLQECMGPAYRCDNYTEFDCKTNYRCIPKWAVCNGFDDCRDNSDEQNCESLTCKPSGEFRCTNHHCIPLRWRCDGHNDCGDNSDEENCVPRQCSESEFRCDDQTCIPSRWICDQNNDCGDNSDERDCEVMTCHPGYFQCSSGHCIPDQMRCDGFADCLDASDEATCPTRFPNGAYCPATLFECKNHVCVQPSWKCDGDNDCGDGSDEELHLCLNITCDLTNRFRCDNNRCIYRHELCNHEDDCGDGSDEKKENCLAPTPRPCTEGEFKCSNGHCISQHLVCDDVDDCGDHFDETGCNTGEERSCAENLCEHNCTQLIGGGFICSCRPGFKASSLNRNSCEDINECEQFGVCPQNCHNTKGSYECTCAEGFRSMSEHYGERCAAEGNPPLLLLPENVRVRKYNLSSEKFSDYLEDQERIQALDYDWDPEGTGLSVVYYTVLGHGSKFGAIKRAYIPNFESGSNNPVKEVNLGLKYIVQPDGIAVDWVGRHIYWSDAKTQRIEVAELDGRYRKWLITTLLDQPAAIVVNPKQGLMYWTDWGKNPKIEIAWMDGQHRKVLVQEDLGWPTGLSIDYVNSDRIYWSDLKEDVIETIKHDGTDRKVVVTAAMNPYSLDIFESQLYWISKDKGEIWVQDKFERDRKEKLLIVNPWLTQVRIFHQRRYNQSVPNRCKKVCSHLCLLKPEGYTCACPQGSRFIAGSVTECDAAIESPVTMPPPCRCMNEGNCYFDKNNLPKCKCPSGYMGEYCEIGLSKGISPGTTVAVLVTLILIIIIGGLVALGFFHYRKTGSILISMPRLPSLSNLSKYTENGNGVTFRSGEDVNMDIGVSGFGPESAIDRSMAMSEHFAMDLEKPPIIFENPMYTSKDGTIRMAQPTTTQVSESGNVYNKNYGSPVNPDELAPDTKPASPSADETQVTKWNIFKRKPKQNTNFENPIYAETENEPKVGAAVTPPPSPSPPAKKTQKKGTTPAYSATEDTFKDTANLVREDSEA</sequence>
<name>LRP2_PIG</name>